<organism>
    <name type="scientific">Shigella flexneri serotype 5b (strain 8401)</name>
    <dbReference type="NCBI Taxonomy" id="373384"/>
    <lineage>
        <taxon>Bacteria</taxon>
        <taxon>Pseudomonadati</taxon>
        <taxon>Pseudomonadota</taxon>
        <taxon>Gammaproteobacteria</taxon>
        <taxon>Enterobacterales</taxon>
        <taxon>Enterobacteriaceae</taxon>
        <taxon>Shigella</taxon>
    </lineage>
</organism>
<gene>
    <name evidence="1" type="primary">rplO</name>
    <name type="ordered locus">SFV_3321</name>
</gene>
<comment type="function">
    <text evidence="1">Binds to the 23S rRNA.</text>
</comment>
<comment type="subunit">
    <text evidence="1">Part of the 50S ribosomal subunit.</text>
</comment>
<comment type="similarity">
    <text evidence="1">Belongs to the universal ribosomal protein uL15 family.</text>
</comment>
<sequence>MRLNTLSPAEGSKKAGKRLGRGIGSGLGKTGGRGHKGQKSRSGGGVRRGFEGGQMPLYRRLPKFGFTSRKAAITAEVRLSDLAKVEGGVVDLNTLKAANIIGIQIEFAKVILAGEVTTPVTVRGLRVTKGARAAIEAAGGKIEE</sequence>
<keyword id="KW-0687">Ribonucleoprotein</keyword>
<keyword id="KW-0689">Ribosomal protein</keyword>
<keyword id="KW-0694">RNA-binding</keyword>
<keyword id="KW-0699">rRNA-binding</keyword>
<dbReference type="EMBL" id="CP000266">
    <property type="protein sequence ID" value="ABF05364.1"/>
    <property type="molecule type" value="Genomic_DNA"/>
</dbReference>
<dbReference type="RefSeq" id="WP_001238917.1">
    <property type="nucleotide sequence ID" value="NC_008258.1"/>
</dbReference>
<dbReference type="SMR" id="Q0T001"/>
<dbReference type="GeneID" id="93778686"/>
<dbReference type="KEGG" id="sfv:SFV_3321"/>
<dbReference type="HOGENOM" id="CLU_055188_4_2_6"/>
<dbReference type="Proteomes" id="UP000000659">
    <property type="component" value="Chromosome"/>
</dbReference>
<dbReference type="GO" id="GO:0022625">
    <property type="term" value="C:cytosolic large ribosomal subunit"/>
    <property type="evidence" value="ECO:0007669"/>
    <property type="project" value="TreeGrafter"/>
</dbReference>
<dbReference type="GO" id="GO:0019843">
    <property type="term" value="F:rRNA binding"/>
    <property type="evidence" value="ECO:0007669"/>
    <property type="project" value="UniProtKB-UniRule"/>
</dbReference>
<dbReference type="GO" id="GO:0003735">
    <property type="term" value="F:structural constituent of ribosome"/>
    <property type="evidence" value="ECO:0007669"/>
    <property type="project" value="InterPro"/>
</dbReference>
<dbReference type="GO" id="GO:0006412">
    <property type="term" value="P:translation"/>
    <property type="evidence" value="ECO:0007669"/>
    <property type="project" value="UniProtKB-UniRule"/>
</dbReference>
<dbReference type="FunFam" id="3.100.10.10:FF:000003">
    <property type="entry name" value="50S ribosomal protein L15"/>
    <property type="match status" value="1"/>
</dbReference>
<dbReference type="Gene3D" id="3.100.10.10">
    <property type="match status" value="1"/>
</dbReference>
<dbReference type="HAMAP" id="MF_01341">
    <property type="entry name" value="Ribosomal_uL15"/>
    <property type="match status" value="1"/>
</dbReference>
<dbReference type="InterPro" id="IPR030878">
    <property type="entry name" value="Ribosomal_uL15"/>
</dbReference>
<dbReference type="InterPro" id="IPR021131">
    <property type="entry name" value="Ribosomal_uL15/eL18"/>
</dbReference>
<dbReference type="InterPro" id="IPR036227">
    <property type="entry name" value="Ribosomal_uL15/eL18_sf"/>
</dbReference>
<dbReference type="InterPro" id="IPR005749">
    <property type="entry name" value="Ribosomal_uL15_bac-type"/>
</dbReference>
<dbReference type="InterPro" id="IPR001196">
    <property type="entry name" value="Ribosomal_uL15_CS"/>
</dbReference>
<dbReference type="NCBIfam" id="TIGR01071">
    <property type="entry name" value="rplO_bact"/>
    <property type="match status" value="1"/>
</dbReference>
<dbReference type="PANTHER" id="PTHR12934">
    <property type="entry name" value="50S RIBOSOMAL PROTEIN L15"/>
    <property type="match status" value="1"/>
</dbReference>
<dbReference type="PANTHER" id="PTHR12934:SF11">
    <property type="entry name" value="LARGE RIBOSOMAL SUBUNIT PROTEIN UL15M"/>
    <property type="match status" value="1"/>
</dbReference>
<dbReference type="Pfam" id="PF00828">
    <property type="entry name" value="Ribosomal_L27A"/>
    <property type="match status" value="1"/>
</dbReference>
<dbReference type="SUPFAM" id="SSF52080">
    <property type="entry name" value="Ribosomal proteins L15p and L18e"/>
    <property type="match status" value="1"/>
</dbReference>
<dbReference type="PROSITE" id="PS00475">
    <property type="entry name" value="RIBOSOMAL_L15"/>
    <property type="match status" value="1"/>
</dbReference>
<feature type="chain" id="PRO_1000054545" description="Large ribosomal subunit protein uL15">
    <location>
        <begin position="1"/>
        <end position="144"/>
    </location>
</feature>
<feature type="region of interest" description="Disordered" evidence="2">
    <location>
        <begin position="1"/>
        <end position="54"/>
    </location>
</feature>
<feature type="compositionally biased region" description="Gly residues" evidence="2">
    <location>
        <begin position="21"/>
        <end position="31"/>
    </location>
</feature>
<name>RL15_SHIF8</name>
<proteinExistence type="inferred from homology"/>
<evidence type="ECO:0000255" key="1">
    <source>
        <dbReference type="HAMAP-Rule" id="MF_01341"/>
    </source>
</evidence>
<evidence type="ECO:0000256" key="2">
    <source>
        <dbReference type="SAM" id="MobiDB-lite"/>
    </source>
</evidence>
<evidence type="ECO:0000305" key="3"/>
<reference key="1">
    <citation type="journal article" date="2006" name="BMC Genomics">
        <title>Complete genome sequence of Shigella flexneri 5b and comparison with Shigella flexneri 2a.</title>
        <authorList>
            <person name="Nie H."/>
            <person name="Yang F."/>
            <person name="Zhang X."/>
            <person name="Yang J."/>
            <person name="Chen L."/>
            <person name="Wang J."/>
            <person name="Xiong Z."/>
            <person name="Peng J."/>
            <person name="Sun L."/>
            <person name="Dong J."/>
            <person name="Xue Y."/>
            <person name="Xu X."/>
            <person name="Chen S."/>
            <person name="Yao Z."/>
            <person name="Shen Y."/>
            <person name="Jin Q."/>
        </authorList>
    </citation>
    <scope>NUCLEOTIDE SEQUENCE [LARGE SCALE GENOMIC DNA]</scope>
    <source>
        <strain>8401</strain>
    </source>
</reference>
<protein>
    <recommendedName>
        <fullName evidence="1">Large ribosomal subunit protein uL15</fullName>
    </recommendedName>
    <alternativeName>
        <fullName evidence="3">50S ribosomal protein L15</fullName>
    </alternativeName>
</protein>
<accession>Q0T001</accession>